<name>RPOC_SULNB</name>
<evidence type="ECO:0000255" key="1">
    <source>
        <dbReference type="HAMAP-Rule" id="MF_01322"/>
    </source>
</evidence>
<reference key="1">
    <citation type="journal article" date="2007" name="Proc. Natl. Acad. Sci. U.S.A.">
        <title>Deep-sea vent epsilon-proteobacterial genomes provide insights into emergence of pathogens.</title>
        <authorList>
            <person name="Nakagawa S."/>
            <person name="Takaki Y."/>
            <person name="Shimamura S."/>
            <person name="Reysenbach A.-L."/>
            <person name="Takai K."/>
            <person name="Horikoshi K."/>
        </authorList>
    </citation>
    <scope>NUCLEOTIDE SEQUENCE [LARGE SCALE GENOMIC DNA]</scope>
    <source>
        <strain>NBC37-1</strain>
    </source>
</reference>
<protein>
    <recommendedName>
        <fullName evidence="1">DNA-directed RNA polymerase subunit beta'</fullName>
        <shortName evidence="1">RNAP subunit beta'</shortName>
        <ecNumber evidence="1">2.7.7.6</ecNumber>
    </recommendedName>
    <alternativeName>
        <fullName evidence="1">RNA polymerase subunit beta'</fullName>
    </alternativeName>
    <alternativeName>
        <fullName evidence="1">Transcriptase subunit beta'</fullName>
    </alternativeName>
</protein>
<proteinExistence type="inferred from homology"/>
<keyword id="KW-0240">DNA-directed RNA polymerase</keyword>
<keyword id="KW-0460">Magnesium</keyword>
<keyword id="KW-0479">Metal-binding</keyword>
<keyword id="KW-0548">Nucleotidyltransferase</keyword>
<keyword id="KW-0804">Transcription</keyword>
<keyword id="KW-0808">Transferase</keyword>
<keyword id="KW-0862">Zinc</keyword>
<comment type="function">
    <text evidence="1">DNA-dependent RNA polymerase catalyzes the transcription of DNA into RNA using the four ribonucleoside triphosphates as substrates.</text>
</comment>
<comment type="catalytic activity">
    <reaction evidence="1">
        <text>RNA(n) + a ribonucleoside 5'-triphosphate = RNA(n+1) + diphosphate</text>
        <dbReference type="Rhea" id="RHEA:21248"/>
        <dbReference type="Rhea" id="RHEA-COMP:14527"/>
        <dbReference type="Rhea" id="RHEA-COMP:17342"/>
        <dbReference type="ChEBI" id="CHEBI:33019"/>
        <dbReference type="ChEBI" id="CHEBI:61557"/>
        <dbReference type="ChEBI" id="CHEBI:140395"/>
        <dbReference type="EC" id="2.7.7.6"/>
    </reaction>
</comment>
<comment type="cofactor">
    <cofactor evidence="1">
        <name>Mg(2+)</name>
        <dbReference type="ChEBI" id="CHEBI:18420"/>
    </cofactor>
    <text evidence="1">Binds 1 Mg(2+) ion per subunit.</text>
</comment>
<comment type="cofactor">
    <cofactor evidence="1">
        <name>Zn(2+)</name>
        <dbReference type="ChEBI" id="CHEBI:29105"/>
    </cofactor>
    <text evidence="1">Binds 2 Zn(2+) ions per subunit.</text>
</comment>
<comment type="subunit">
    <text evidence="1">The RNAP catalytic core consists of 2 alpha, 1 beta, 1 beta' and 1 omega subunit. When a sigma factor is associated with the core the holoenzyme is formed, which can initiate transcription.</text>
</comment>
<comment type="similarity">
    <text evidence="1">Belongs to the RNA polymerase beta' chain family.</text>
</comment>
<accession>A6Q6I3</accession>
<dbReference type="EC" id="2.7.7.6" evidence="1"/>
<dbReference type="EMBL" id="AP009179">
    <property type="protein sequence ID" value="BAF71092.1"/>
    <property type="molecule type" value="Genomic_DNA"/>
</dbReference>
<dbReference type="RefSeq" id="WP_011979825.1">
    <property type="nucleotide sequence ID" value="NC_009663.1"/>
</dbReference>
<dbReference type="SMR" id="A6Q6I3"/>
<dbReference type="STRING" id="387093.SUN_0132"/>
<dbReference type="KEGG" id="sun:SUN_0132"/>
<dbReference type="eggNOG" id="COG0086">
    <property type="taxonomic scope" value="Bacteria"/>
</dbReference>
<dbReference type="HOGENOM" id="CLU_000524_3_1_7"/>
<dbReference type="OrthoDB" id="9815296at2"/>
<dbReference type="Proteomes" id="UP000006378">
    <property type="component" value="Chromosome"/>
</dbReference>
<dbReference type="GO" id="GO:0000428">
    <property type="term" value="C:DNA-directed RNA polymerase complex"/>
    <property type="evidence" value="ECO:0007669"/>
    <property type="project" value="UniProtKB-KW"/>
</dbReference>
<dbReference type="GO" id="GO:0003677">
    <property type="term" value="F:DNA binding"/>
    <property type="evidence" value="ECO:0007669"/>
    <property type="project" value="UniProtKB-UniRule"/>
</dbReference>
<dbReference type="GO" id="GO:0003899">
    <property type="term" value="F:DNA-directed RNA polymerase activity"/>
    <property type="evidence" value="ECO:0007669"/>
    <property type="project" value="UniProtKB-UniRule"/>
</dbReference>
<dbReference type="GO" id="GO:0000287">
    <property type="term" value="F:magnesium ion binding"/>
    <property type="evidence" value="ECO:0007669"/>
    <property type="project" value="UniProtKB-UniRule"/>
</dbReference>
<dbReference type="GO" id="GO:0008270">
    <property type="term" value="F:zinc ion binding"/>
    <property type="evidence" value="ECO:0007669"/>
    <property type="project" value="UniProtKB-UniRule"/>
</dbReference>
<dbReference type="GO" id="GO:0006351">
    <property type="term" value="P:DNA-templated transcription"/>
    <property type="evidence" value="ECO:0007669"/>
    <property type="project" value="UniProtKB-UniRule"/>
</dbReference>
<dbReference type="CDD" id="cd02655">
    <property type="entry name" value="RNAP_beta'_C"/>
    <property type="match status" value="1"/>
</dbReference>
<dbReference type="CDD" id="cd01609">
    <property type="entry name" value="RNAP_beta'_N"/>
    <property type="match status" value="1"/>
</dbReference>
<dbReference type="FunFam" id="1.10.132.30:FF:000003">
    <property type="entry name" value="DNA-directed RNA polymerase subunit beta"/>
    <property type="match status" value="1"/>
</dbReference>
<dbReference type="Gene3D" id="1.10.132.30">
    <property type="match status" value="1"/>
</dbReference>
<dbReference type="Gene3D" id="1.10.150.390">
    <property type="match status" value="1"/>
</dbReference>
<dbReference type="Gene3D" id="1.10.1790.20">
    <property type="match status" value="1"/>
</dbReference>
<dbReference type="Gene3D" id="1.10.40.90">
    <property type="match status" value="1"/>
</dbReference>
<dbReference type="Gene3D" id="2.40.40.20">
    <property type="match status" value="1"/>
</dbReference>
<dbReference type="Gene3D" id="2.40.50.100">
    <property type="match status" value="3"/>
</dbReference>
<dbReference type="Gene3D" id="4.10.860.120">
    <property type="entry name" value="RNA polymerase II, clamp domain"/>
    <property type="match status" value="1"/>
</dbReference>
<dbReference type="Gene3D" id="1.10.274.100">
    <property type="entry name" value="RNA polymerase Rpb1, domain 3"/>
    <property type="match status" value="2"/>
</dbReference>
<dbReference type="HAMAP" id="MF_01322">
    <property type="entry name" value="RNApol_bact_RpoC"/>
    <property type="match status" value="1"/>
</dbReference>
<dbReference type="InterPro" id="IPR045867">
    <property type="entry name" value="DNA-dir_RpoC_beta_prime"/>
</dbReference>
<dbReference type="InterPro" id="IPR012754">
    <property type="entry name" value="DNA-dir_RpoC_beta_prime_bact"/>
</dbReference>
<dbReference type="InterPro" id="IPR000722">
    <property type="entry name" value="RNA_pol_asu"/>
</dbReference>
<dbReference type="InterPro" id="IPR006592">
    <property type="entry name" value="RNA_pol_N"/>
</dbReference>
<dbReference type="InterPro" id="IPR007080">
    <property type="entry name" value="RNA_pol_Rpb1_1"/>
</dbReference>
<dbReference type="InterPro" id="IPR007066">
    <property type="entry name" value="RNA_pol_Rpb1_3"/>
</dbReference>
<dbReference type="InterPro" id="IPR042102">
    <property type="entry name" value="RNA_pol_Rpb1_3_sf"/>
</dbReference>
<dbReference type="InterPro" id="IPR007083">
    <property type="entry name" value="RNA_pol_Rpb1_4"/>
</dbReference>
<dbReference type="InterPro" id="IPR007081">
    <property type="entry name" value="RNA_pol_Rpb1_5"/>
</dbReference>
<dbReference type="InterPro" id="IPR044893">
    <property type="entry name" value="RNA_pol_Rpb1_clamp_domain"/>
</dbReference>
<dbReference type="InterPro" id="IPR038120">
    <property type="entry name" value="Rpb1_funnel_sf"/>
</dbReference>
<dbReference type="NCBIfam" id="TIGR02386">
    <property type="entry name" value="rpoC_TIGR"/>
    <property type="match status" value="1"/>
</dbReference>
<dbReference type="PANTHER" id="PTHR19376">
    <property type="entry name" value="DNA-DIRECTED RNA POLYMERASE"/>
    <property type="match status" value="1"/>
</dbReference>
<dbReference type="PANTHER" id="PTHR19376:SF54">
    <property type="entry name" value="DNA-DIRECTED RNA POLYMERASE SUBUNIT BETA"/>
    <property type="match status" value="1"/>
</dbReference>
<dbReference type="Pfam" id="PF04997">
    <property type="entry name" value="RNA_pol_Rpb1_1"/>
    <property type="match status" value="1"/>
</dbReference>
<dbReference type="Pfam" id="PF00623">
    <property type="entry name" value="RNA_pol_Rpb1_2"/>
    <property type="match status" value="2"/>
</dbReference>
<dbReference type="Pfam" id="PF04983">
    <property type="entry name" value="RNA_pol_Rpb1_3"/>
    <property type="match status" value="1"/>
</dbReference>
<dbReference type="Pfam" id="PF05000">
    <property type="entry name" value="RNA_pol_Rpb1_4"/>
    <property type="match status" value="1"/>
</dbReference>
<dbReference type="Pfam" id="PF04998">
    <property type="entry name" value="RNA_pol_Rpb1_5"/>
    <property type="match status" value="1"/>
</dbReference>
<dbReference type="SMART" id="SM00663">
    <property type="entry name" value="RPOLA_N"/>
    <property type="match status" value="1"/>
</dbReference>
<dbReference type="SUPFAM" id="SSF64484">
    <property type="entry name" value="beta and beta-prime subunits of DNA dependent RNA-polymerase"/>
    <property type="match status" value="1"/>
</dbReference>
<organism>
    <name type="scientific">Sulfurovum sp. (strain NBC37-1)</name>
    <dbReference type="NCBI Taxonomy" id="387093"/>
    <lineage>
        <taxon>Bacteria</taxon>
        <taxon>Pseudomonadati</taxon>
        <taxon>Campylobacterota</taxon>
        <taxon>Epsilonproteobacteria</taxon>
        <taxon>Campylobacterales</taxon>
        <taxon>Sulfurovaceae</taxon>
        <taxon>Sulfurovum</taxon>
    </lineage>
</organism>
<sequence length="1509" mass="166492">MSKFLENLTPIDLNSDDRPKDIAALQLKVASPEKVLSWSYGEVKKPETINYRTLKPERDGLFCAKIFGPIRDYECLCGKYKKMRYKGVVCEKCGVEVTSSKVRRNRMGHIDLIAPVAHIWYVSSLPSRIGTLLGVKMKDLERVLYYEAYIVKTPGEASYDNEGLNPVQKYDVLNEEQYQQISSRFGDTGLDARMGGEIVQELLADLDLVDMFAQLKEDIQATKSEAKRKTIVKRLKVIEAFLHSGNRPEWMMLTQLPVLPPDLRPLVSLDGGKFAVSDVNDLYRRVINRNQRLKRLVELDAPEIIVRNEKRMLQEAVDALFDNGRRGNAVKGANKRPLKSLSEVIKGKQGRFRQNLLGKRVDFSGRSVIVVGPDLRMDQCGLPKKMAIELFKPHLMAKLEEKGYATTLKQAKKMIEQQVNEVWECLEEVVENYPVLLNRAPTLHKLSIQAFHPRLIEGKAIQLHPLVCSAFNADFDGDQMAVHVPLSDEAIAEAKVLMLASMNILLPASGKAIAVPSQDMILGLYYLTLEKNDVKGQHKLFANVEEVEIAFEQQALDLNARIRTVLDGRIATSTAGRLILKSIIPDYVPEKYWNKVLKKKDIGALVDYIYKIGGVSETAGFLDNLKDMGFKYATKVGVSISVDDIKIPEMKEGRVQTAKEQVKEIQRQYAAGLLTDQERYNKIIDIWTDANNSIAEALMDLIRKDKDGFNSVHMMADSGARGSAAQIRQLSGMRGLMAKSDGSIIETPITSNFREGLNVLEYFISTHGARKGLADTALKTANAGYLTRKLIDVAQNVKVSMTDCGTHEGVEVSDIVVGNEMIEPLADRIYGRVLAEDIIDPITSEVLVSEGTMIDEETATRVQEAGVRSVVMRAPSSCKAPKGICAKCYGLNMADNKMVKRGEAVGVIAAQSIGEPGTQLTLRTFHTGGTATAGKEERSVVATKEGFVRYYNLSVYRNTEGKLIVANRRNAGVLLVEPKIKAVNKGKVSIVVTHDEIVISVENNGDDEVRYNLRKSDVAKSNELAGVAGKIEGKLFLPLKDGDMVEEGDSIVEVIKEGWSIPSRIPFASELKVEDGAPVTQEVLSEAKGTVKFFLLKGDYLEAHDGVKSGDKVEEKGLFAVVVDDNNREAGRHYISRGSVVHVDNNAKVERGATLSAPEKTTQVVIAEWDPYSEPIIAEQKGTLKFEDIIPGVTVVEQFDEVTGDTRLELNEYIPAAYKPAITLATESGELIRYQLDPKTILFVKDGEEVNIADILAKTPKAAIKSKDITGGLPRVSELFEARRPKDIALIAQIDGVVSFGKPLRGKERLIISGDNGQITEQFIDKNKVALVHTGEYVHAGEKLTDGIVSSHDILAALGEKALYDYIVSEVQMVYRRQGVNISDKHIEIVTSQMMRQVKVVESGDSNFIAGDIISRRKFQEENQRVIALGGEPAIAEPMLVGITRAAVGADSIISAASFQDTTKVLTSASIAGTVDMLEDLKENVVIGRLIPVGTGMIDSDEIKFSAAE</sequence>
<gene>
    <name evidence="1" type="primary">rpoC</name>
    <name type="ordered locus">SUN_0132</name>
</gene>
<feature type="chain" id="PRO_0000308893" description="DNA-directed RNA polymerase subunit beta'">
    <location>
        <begin position="1"/>
        <end position="1509"/>
    </location>
</feature>
<feature type="binding site" evidence="1">
    <location>
        <position position="75"/>
    </location>
    <ligand>
        <name>Zn(2+)</name>
        <dbReference type="ChEBI" id="CHEBI:29105"/>
        <label>1</label>
    </ligand>
</feature>
<feature type="binding site" evidence="1">
    <location>
        <position position="77"/>
    </location>
    <ligand>
        <name>Zn(2+)</name>
        <dbReference type="ChEBI" id="CHEBI:29105"/>
        <label>1</label>
    </ligand>
</feature>
<feature type="binding site" evidence="1">
    <location>
        <position position="90"/>
    </location>
    <ligand>
        <name>Zn(2+)</name>
        <dbReference type="ChEBI" id="CHEBI:29105"/>
        <label>1</label>
    </ligand>
</feature>
<feature type="binding site" evidence="1">
    <location>
        <position position="93"/>
    </location>
    <ligand>
        <name>Zn(2+)</name>
        <dbReference type="ChEBI" id="CHEBI:29105"/>
        <label>1</label>
    </ligand>
</feature>
<feature type="binding site" evidence="1">
    <location>
        <position position="474"/>
    </location>
    <ligand>
        <name>Mg(2+)</name>
        <dbReference type="ChEBI" id="CHEBI:18420"/>
    </ligand>
</feature>
<feature type="binding site" evidence="1">
    <location>
        <position position="476"/>
    </location>
    <ligand>
        <name>Mg(2+)</name>
        <dbReference type="ChEBI" id="CHEBI:18420"/>
    </ligand>
</feature>
<feature type="binding site" evidence="1">
    <location>
        <position position="478"/>
    </location>
    <ligand>
        <name>Mg(2+)</name>
        <dbReference type="ChEBI" id="CHEBI:18420"/>
    </ligand>
</feature>
<feature type="binding site" evidence="1">
    <location>
        <position position="804"/>
    </location>
    <ligand>
        <name>Zn(2+)</name>
        <dbReference type="ChEBI" id="CHEBI:29105"/>
        <label>2</label>
    </ligand>
</feature>
<feature type="binding site" evidence="1">
    <location>
        <position position="878"/>
    </location>
    <ligand>
        <name>Zn(2+)</name>
        <dbReference type="ChEBI" id="CHEBI:29105"/>
        <label>2</label>
    </ligand>
</feature>
<feature type="binding site" evidence="1">
    <location>
        <position position="885"/>
    </location>
    <ligand>
        <name>Zn(2+)</name>
        <dbReference type="ChEBI" id="CHEBI:29105"/>
        <label>2</label>
    </ligand>
</feature>
<feature type="binding site" evidence="1">
    <location>
        <position position="888"/>
    </location>
    <ligand>
        <name>Zn(2+)</name>
        <dbReference type="ChEBI" id="CHEBI:29105"/>
        <label>2</label>
    </ligand>
</feature>